<accession>P32873</accession>
<accession>D6W3Q3</accession>
<comment type="function">
    <text evidence="5 6">GTPase-activating protein (GAP) for CDC42 and less efficiently for RHO1. Negative regulator of the pheromone-response pathway through the STE20 protein kinase.</text>
</comment>
<comment type="subcellular location">
    <subcellularLocation>
        <location>Cytoplasm</location>
    </subcellularLocation>
</comment>
<comment type="miscellaneous">
    <text evidence="4">Present with 752 molecules/cell in log phase SD medium.</text>
</comment>
<protein>
    <recommendedName>
        <fullName>GTPase-activating protein BEM3</fullName>
    </recommendedName>
    <alternativeName>
        <fullName>Bud emergence protein 3</fullName>
    </alternativeName>
</protein>
<proteinExistence type="evidence at protein level"/>
<keyword id="KW-0002">3D-structure</keyword>
<keyword id="KW-0963">Cytoplasm</keyword>
<keyword id="KW-0343">GTPase activation</keyword>
<keyword id="KW-0597">Phosphoprotein</keyword>
<keyword id="KW-1185">Reference proteome</keyword>
<sequence length="1128" mass="124913">MTDNLTTTHGGSTTLELLAQYNDHRSKKDKSIEHIEKGTCSGKERNPSYDEIFTENIKLKLQVQEYETEIESLEKVIDMLQKNREASLEVVLEQVQNDSRDSYVNDQSFVLPPRSAERKAHIKSLNLPIPTLSPPLQQGSDVALETSVTPTVPQIGVTSNTSISRKHLQNMILNDEIEANSSFSSPKIINRSVSSPTKIHSEQLASPAASVTYTTSRITIKSPNKGSKSPLQERLRSPQNPNRMTAVINNHLHSPLKASTSNNLDELTESKSQQLTNDAIQKNDRVYSSITSSAYTTGTPTSAAKSPSSLLEVKEGENKALGFSPASKEKLDDFTQLLDSSFGEEDLVNTDSKDPLSIKSTINESLPPPPAPPTFFSPTSSGNIKNSTPLSSHLASPVILNKKDDNFGAQSAKNLKKPVLTSSLPNLSTKLSTTSQNASLPPNPPVESSSKQKQLGETASIHSTNTLNTFSSTPQGSLKTLRRPHASSVSTVKSVAQSLKSDIPLFVQPEDFGTIQIEVLSTLYRDNEDDLSILIAIIDRKSGKEMFKFSKSIHKVRELDVYMKSHVPDLPLPTLPDRQLFQTLSPTKVDTRKNILNQYYTSIFSVPEFPKNVGLKIAQFISTDTVMTPPMMDDNVKDGSLLLRRPKTLTGNSTWRVRYGILRDDVLQLFDKNQLTETIKLRQSSIELIPNLPEDRFGTRNGFLITEHKKSGLSTSTKYYICTETSKERELWLSAFSDYIDPSQSLSLSSSRNANDTDSASHLSAGTHHSKFGNATISATDTPSYVTDLTQEYNNNNNISNSSNNIANSDGIDSNPSSHSNFLASSSGNAEEEKDSRRAKMRSLFPFKKLTGPASAMNHIGITISNDSDSPTSPDSIIKSPSKKLMEVSSSSNSSTGPHVSTAIFGSSLETCLRLSSHKYQNVYDLPSVVYRCLEYLYKNRGIQEEGIFRLSGSSTVIKTLQERFDKEYDVDLCRYNESIEAKDDEASPSLYIGVNTVSGLLKLYLRKLPHLLFGDEQFLSFKRVVDENHNNPVQISLGFKELIESGLVPHANLSLMYALFELLVRINENSKFNKMNLRNLCIVFSPTLNIPISMLQPFITDFACIFQGGEPVKEEEREKVDIHIPQV</sequence>
<reference key="1">
    <citation type="journal article" date="1994" name="J. Biol. Chem.">
        <title>Control of the yeast bud-site assembly GTPase Cdc42. Catalysis of guanine nucleotide exchange by Cdc24 and stimulation of GTPase activity by Bem3.</title>
        <authorList>
            <person name="Zheng Y."/>
            <person name="Cerione R."/>
            <person name="Bender A."/>
        </authorList>
    </citation>
    <scope>NUCLEOTIDE SEQUENCE [GENOMIC DNA]</scope>
    <scope>FUNCTION</scope>
</reference>
<reference key="2">
    <citation type="journal article" date="1997" name="Nature">
        <title>The nucleotide sequence of Saccharomyces cerevisiae chromosome XVI.</title>
        <authorList>
            <person name="Bussey H."/>
            <person name="Storms R.K."/>
            <person name="Ahmed A."/>
            <person name="Albermann K."/>
            <person name="Allen E."/>
            <person name="Ansorge W."/>
            <person name="Araujo R."/>
            <person name="Aparicio A."/>
            <person name="Barrell B.G."/>
            <person name="Badcock K."/>
            <person name="Benes V."/>
            <person name="Botstein D."/>
            <person name="Bowman S."/>
            <person name="Brueckner M."/>
            <person name="Carpenter J."/>
            <person name="Cherry J.M."/>
            <person name="Chung E."/>
            <person name="Churcher C.M."/>
            <person name="Coster F."/>
            <person name="Davis K."/>
            <person name="Davis R.W."/>
            <person name="Dietrich F.S."/>
            <person name="Delius H."/>
            <person name="DiPaolo T."/>
            <person name="Dubois E."/>
            <person name="Duesterhoeft A."/>
            <person name="Duncan M."/>
            <person name="Floeth M."/>
            <person name="Fortin N."/>
            <person name="Friesen J.D."/>
            <person name="Fritz C."/>
            <person name="Goffeau A."/>
            <person name="Hall J."/>
            <person name="Hebling U."/>
            <person name="Heumann K."/>
            <person name="Hilbert H."/>
            <person name="Hillier L.W."/>
            <person name="Hunicke-Smith S."/>
            <person name="Hyman R.W."/>
            <person name="Johnston M."/>
            <person name="Kalman S."/>
            <person name="Kleine K."/>
            <person name="Komp C."/>
            <person name="Kurdi O."/>
            <person name="Lashkari D."/>
            <person name="Lew H."/>
            <person name="Lin A."/>
            <person name="Lin D."/>
            <person name="Louis E.J."/>
            <person name="Marathe R."/>
            <person name="Messenguy F."/>
            <person name="Mewes H.-W."/>
            <person name="Mirtipati S."/>
            <person name="Moestl D."/>
            <person name="Mueller-Auer S."/>
            <person name="Namath A."/>
            <person name="Nentwich U."/>
            <person name="Oefner P."/>
            <person name="Pearson D."/>
            <person name="Petel F.X."/>
            <person name="Pohl T.M."/>
            <person name="Purnelle B."/>
            <person name="Rajandream M.A."/>
            <person name="Rechmann S."/>
            <person name="Rieger M."/>
            <person name="Riles L."/>
            <person name="Roberts D."/>
            <person name="Schaefer M."/>
            <person name="Scharfe M."/>
            <person name="Scherens B."/>
            <person name="Schramm S."/>
            <person name="Schroeder M."/>
            <person name="Sdicu A.-M."/>
            <person name="Tettelin H."/>
            <person name="Urrestarazu L.A."/>
            <person name="Ushinsky S."/>
            <person name="Vierendeels F."/>
            <person name="Vissers S."/>
            <person name="Voss H."/>
            <person name="Walsh S.V."/>
            <person name="Wambutt R."/>
            <person name="Wang Y."/>
            <person name="Wedler E."/>
            <person name="Wedler H."/>
            <person name="Winnett E."/>
            <person name="Zhong W.-W."/>
            <person name="Zollner A."/>
            <person name="Vo D.H."/>
            <person name="Hani J."/>
        </authorList>
    </citation>
    <scope>NUCLEOTIDE SEQUENCE [LARGE SCALE GENOMIC DNA]</scope>
    <source>
        <strain>ATCC 204508 / S288c</strain>
    </source>
</reference>
<reference key="3">
    <citation type="journal article" date="2014" name="G3 (Bethesda)">
        <title>The reference genome sequence of Saccharomyces cerevisiae: Then and now.</title>
        <authorList>
            <person name="Engel S.R."/>
            <person name="Dietrich F.S."/>
            <person name="Fisk D.G."/>
            <person name="Binkley G."/>
            <person name="Balakrishnan R."/>
            <person name="Costanzo M.C."/>
            <person name="Dwight S.S."/>
            <person name="Hitz B.C."/>
            <person name="Karra K."/>
            <person name="Nash R.S."/>
            <person name="Weng S."/>
            <person name="Wong E.D."/>
            <person name="Lloyd P."/>
            <person name="Skrzypek M.S."/>
            <person name="Miyasato S.R."/>
            <person name="Simison M."/>
            <person name="Cherry J.M."/>
        </authorList>
    </citation>
    <scope>GENOME REANNOTATION</scope>
    <source>
        <strain>ATCC 204508 / S288c</strain>
    </source>
</reference>
<reference key="4">
    <citation type="journal article" date="1993" name="J. Biol. Chem.">
        <title>Biochemical comparisons of the Saccharomyces cerevisiae Bem2 and Bem3 proteins. Delineation of a limit Cdc42 GTPase-activating protein domain.</title>
        <authorList>
            <person name="Zheng Y."/>
            <person name="Hart M.J."/>
            <person name="Shinjo K."/>
            <person name="Evans T."/>
            <person name="Bender A."/>
            <person name="Cerione R.A."/>
        </authorList>
    </citation>
    <scope>FUNCTION</scope>
</reference>
<reference key="5">
    <citation type="journal article" date="2003" name="Nature">
        <title>Global analysis of protein expression in yeast.</title>
        <authorList>
            <person name="Ghaemmaghami S."/>
            <person name="Huh W.-K."/>
            <person name="Bower K."/>
            <person name="Howson R.W."/>
            <person name="Belle A."/>
            <person name="Dephoure N."/>
            <person name="O'Shea E.K."/>
            <person name="Weissman J.S."/>
        </authorList>
    </citation>
    <scope>LEVEL OF PROTEIN EXPRESSION [LARGE SCALE ANALYSIS]</scope>
</reference>
<reference key="6">
    <citation type="journal article" date="2007" name="J. Proteome Res.">
        <title>Large-scale phosphorylation analysis of alpha-factor-arrested Saccharomyces cerevisiae.</title>
        <authorList>
            <person name="Li X."/>
            <person name="Gerber S.A."/>
            <person name="Rudner A.D."/>
            <person name="Beausoleil S.A."/>
            <person name="Haas W."/>
            <person name="Villen J."/>
            <person name="Elias J.E."/>
            <person name="Gygi S.P."/>
        </authorList>
    </citation>
    <scope>IDENTIFICATION BY MASS SPECTROMETRY [LARGE SCALE ANALYSIS]</scope>
    <source>
        <strain>ADR376</strain>
    </source>
</reference>
<reference key="7">
    <citation type="journal article" date="2007" name="Proc. Natl. Acad. Sci. U.S.A.">
        <title>Analysis of phosphorylation sites on proteins from Saccharomyces cerevisiae by electron transfer dissociation (ETD) mass spectrometry.</title>
        <authorList>
            <person name="Chi A."/>
            <person name="Huttenhower C."/>
            <person name="Geer L.Y."/>
            <person name="Coon J.J."/>
            <person name="Syka J.E.P."/>
            <person name="Bai D.L."/>
            <person name="Shabanowitz J."/>
            <person name="Burke D.J."/>
            <person name="Troyanskaya O.G."/>
            <person name="Hunt D.F."/>
        </authorList>
    </citation>
    <scope>IDENTIFICATION BY MASS SPECTROMETRY [LARGE SCALE ANALYSIS]</scope>
</reference>
<reference key="8">
    <citation type="journal article" date="2008" name="Mol. Cell. Proteomics">
        <title>A multidimensional chromatography technology for in-depth phosphoproteome analysis.</title>
        <authorList>
            <person name="Albuquerque C.P."/>
            <person name="Smolka M.B."/>
            <person name="Payne S.H."/>
            <person name="Bafna V."/>
            <person name="Eng J."/>
            <person name="Zhou H."/>
        </authorList>
    </citation>
    <scope>IDENTIFICATION BY MASS SPECTROMETRY [LARGE SCALE ANALYSIS]</scope>
</reference>
<reference key="9">
    <citation type="journal article" date="2009" name="Science">
        <title>Global analysis of Cdk1 substrate phosphorylation sites provides insights into evolution.</title>
        <authorList>
            <person name="Holt L.J."/>
            <person name="Tuch B.B."/>
            <person name="Villen J."/>
            <person name="Johnson A.D."/>
            <person name="Gygi S.P."/>
            <person name="Morgan D.O."/>
        </authorList>
    </citation>
    <scope>PHOSPHORYLATION [LARGE SCALE ANALYSIS] AT SER-254</scope>
    <scope>IDENTIFICATION BY MASS SPECTROMETRY [LARGE SCALE ANALYSIS]</scope>
</reference>
<gene>
    <name type="primary">BEM3</name>
    <name type="ordered locus">YPL115C</name>
    <name type="ORF">LPH12C</name>
</gene>
<organism>
    <name type="scientific">Saccharomyces cerevisiae (strain ATCC 204508 / S288c)</name>
    <name type="common">Baker's yeast</name>
    <dbReference type="NCBI Taxonomy" id="559292"/>
    <lineage>
        <taxon>Eukaryota</taxon>
        <taxon>Fungi</taxon>
        <taxon>Dikarya</taxon>
        <taxon>Ascomycota</taxon>
        <taxon>Saccharomycotina</taxon>
        <taxon>Saccharomycetes</taxon>
        <taxon>Saccharomycetales</taxon>
        <taxon>Saccharomycetaceae</taxon>
        <taxon>Saccharomyces</taxon>
    </lineage>
</organism>
<evidence type="ECO:0000255" key="1">
    <source>
        <dbReference type="PROSITE-ProRule" id="PRU00145"/>
    </source>
</evidence>
<evidence type="ECO:0000255" key="2">
    <source>
        <dbReference type="PROSITE-ProRule" id="PRU00172"/>
    </source>
</evidence>
<evidence type="ECO:0000256" key="3">
    <source>
        <dbReference type="SAM" id="MobiDB-lite"/>
    </source>
</evidence>
<evidence type="ECO:0000269" key="4">
    <source>
    </source>
</evidence>
<evidence type="ECO:0000269" key="5">
    <source>
    </source>
</evidence>
<evidence type="ECO:0000269" key="6">
    <source>
    </source>
</evidence>
<evidence type="ECO:0007744" key="7">
    <source>
    </source>
</evidence>
<evidence type="ECO:0007829" key="8">
    <source>
        <dbReference type="PDB" id="6FSF"/>
    </source>
</evidence>
<name>BEM3_YEAST</name>
<feature type="chain" id="PRO_0000056728" description="GTPase-activating protein BEM3">
    <location>
        <begin position="1"/>
        <end position="1128"/>
    </location>
</feature>
<feature type="domain" description="PH" evidence="1">
    <location>
        <begin position="634"/>
        <end position="741"/>
    </location>
</feature>
<feature type="domain" description="Rho-GAP" evidence="2">
    <location>
        <begin position="913"/>
        <end position="1128"/>
    </location>
</feature>
<feature type="region of interest" description="Disordered" evidence="3">
    <location>
        <begin position="194"/>
        <end position="241"/>
    </location>
</feature>
<feature type="region of interest" description="Disordered" evidence="3">
    <location>
        <begin position="345"/>
        <end position="391"/>
    </location>
</feature>
<feature type="region of interest" description="Disordered" evidence="3">
    <location>
        <begin position="418"/>
        <end position="486"/>
    </location>
</feature>
<feature type="region of interest" description="Disordered" evidence="3">
    <location>
        <begin position="746"/>
        <end position="777"/>
    </location>
</feature>
<feature type="region of interest" description="Disordered" evidence="3">
    <location>
        <begin position="796"/>
        <end position="838"/>
    </location>
</feature>
<feature type="compositionally biased region" description="Polar residues" evidence="3">
    <location>
        <begin position="209"/>
        <end position="230"/>
    </location>
</feature>
<feature type="compositionally biased region" description="Pro residues" evidence="3">
    <location>
        <begin position="366"/>
        <end position="375"/>
    </location>
</feature>
<feature type="compositionally biased region" description="Polar residues" evidence="3">
    <location>
        <begin position="382"/>
        <end position="391"/>
    </location>
</feature>
<feature type="compositionally biased region" description="Polar residues" evidence="3">
    <location>
        <begin position="420"/>
        <end position="478"/>
    </location>
</feature>
<feature type="compositionally biased region" description="Polar residues" evidence="3">
    <location>
        <begin position="752"/>
        <end position="764"/>
    </location>
</feature>
<feature type="compositionally biased region" description="Low complexity" evidence="3">
    <location>
        <begin position="796"/>
        <end position="815"/>
    </location>
</feature>
<feature type="compositionally biased region" description="Polar residues" evidence="3">
    <location>
        <begin position="816"/>
        <end position="829"/>
    </location>
</feature>
<feature type="site" description="Arginine finger; crucial for GTP hydrolysis by stabilizing the transition state" evidence="2">
    <location>
        <position position="950"/>
    </location>
</feature>
<feature type="modified residue" description="Phosphoserine" evidence="7">
    <location>
        <position position="254"/>
    </location>
</feature>
<feature type="helix" evidence="8">
    <location>
        <begin position="509"/>
        <end position="514"/>
    </location>
</feature>
<feature type="strand" evidence="8">
    <location>
        <begin position="515"/>
        <end position="525"/>
    </location>
</feature>
<feature type="strand" evidence="8">
    <location>
        <begin position="531"/>
        <end position="539"/>
    </location>
</feature>
<feature type="turn" evidence="8">
    <location>
        <begin position="540"/>
        <end position="542"/>
    </location>
</feature>
<feature type="strand" evidence="8">
    <location>
        <begin position="545"/>
        <end position="551"/>
    </location>
</feature>
<feature type="helix" evidence="8">
    <location>
        <begin position="553"/>
        <end position="566"/>
    </location>
</feature>
<feature type="helix" evidence="8">
    <location>
        <begin position="578"/>
        <end position="581"/>
    </location>
</feature>
<feature type="helix" evidence="8">
    <location>
        <begin position="586"/>
        <end position="603"/>
    </location>
</feature>
<feature type="helix" evidence="8">
    <location>
        <begin position="611"/>
        <end position="621"/>
    </location>
</feature>
<feature type="strand" evidence="8">
    <location>
        <begin position="623"/>
        <end position="626"/>
    </location>
</feature>
<feature type="strand" evidence="8">
    <location>
        <begin position="638"/>
        <end position="644"/>
    </location>
</feature>
<feature type="strand" evidence="8">
    <location>
        <begin position="656"/>
        <end position="663"/>
    </location>
</feature>
<feature type="strand" evidence="8">
    <location>
        <begin position="666"/>
        <end position="689"/>
    </location>
</feature>
<feature type="strand" evidence="8">
    <location>
        <begin position="691"/>
        <end position="693"/>
    </location>
</feature>
<feature type="strand" evidence="8">
    <location>
        <begin position="701"/>
        <end position="707"/>
    </location>
</feature>
<feature type="strand" evidence="8">
    <location>
        <begin position="717"/>
        <end position="722"/>
    </location>
</feature>
<feature type="helix" evidence="8">
    <location>
        <begin position="726"/>
        <end position="736"/>
    </location>
</feature>
<dbReference type="EMBL" id="L14558">
    <property type="protein sequence ID" value="AAA34453.1"/>
    <property type="molecule type" value="Genomic_DNA"/>
</dbReference>
<dbReference type="EMBL" id="U43503">
    <property type="protein sequence ID" value="AAB68247.1"/>
    <property type="molecule type" value="Genomic_DNA"/>
</dbReference>
<dbReference type="EMBL" id="BK006949">
    <property type="protein sequence ID" value="DAA11319.1"/>
    <property type="molecule type" value="Genomic_DNA"/>
</dbReference>
<dbReference type="PIR" id="A49960">
    <property type="entry name" value="A49960"/>
</dbReference>
<dbReference type="RefSeq" id="NP_015210.1">
    <property type="nucleotide sequence ID" value="NM_001183929.1"/>
</dbReference>
<dbReference type="PDB" id="6FSF">
    <property type="method" value="X-ray"/>
    <property type="resolution" value="2.20 A"/>
    <property type="chains" value="A=500-765"/>
</dbReference>
<dbReference type="PDB" id="6LP3">
    <property type="method" value="X-ray"/>
    <property type="resolution" value="3.55 A"/>
    <property type="chains" value="C/F=1-99"/>
</dbReference>
<dbReference type="PDBsum" id="6FSF"/>
<dbReference type="PDBsum" id="6LP3"/>
<dbReference type="SMR" id="P32873"/>
<dbReference type="BioGRID" id="36066">
    <property type="interactions" value="202"/>
</dbReference>
<dbReference type="DIP" id="DIP-2575N"/>
<dbReference type="FunCoup" id="P32873">
    <property type="interactions" value="296"/>
</dbReference>
<dbReference type="IntAct" id="P32873">
    <property type="interactions" value="15"/>
</dbReference>
<dbReference type="MINT" id="P32873"/>
<dbReference type="STRING" id="4932.YPL115C"/>
<dbReference type="GlyGen" id="P32873">
    <property type="glycosylation" value="5 sites, 1 O-linked glycan (4 sites)"/>
</dbReference>
<dbReference type="iPTMnet" id="P32873"/>
<dbReference type="PaxDb" id="4932-YPL115C"/>
<dbReference type="PeptideAtlas" id="P32873"/>
<dbReference type="EnsemblFungi" id="YPL115C_mRNA">
    <property type="protein sequence ID" value="YPL115C"/>
    <property type="gene ID" value="YPL115C"/>
</dbReference>
<dbReference type="GeneID" id="855988"/>
<dbReference type="KEGG" id="sce:YPL115C"/>
<dbReference type="AGR" id="SGD:S000006036"/>
<dbReference type="SGD" id="S000006036">
    <property type="gene designation" value="BEM3"/>
</dbReference>
<dbReference type="VEuPathDB" id="FungiDB:YPL115C"/>
<dbReference type="eggNOG" id="KOG4269">
    <property type="taxonomic scope" value="Eukaryota"/>
</dbReference>
<dbReference type="GeneTree" id="ENSGT00940000165908"/>
<dbReference type="HOGENOM" id="CLU_010436_0_0_1"/>
<dbReference type="InParanoid" id="P32873"/>
<dbReference type="OMA" id="QFISTDT"/>
<dbReference type="OrthoDB" id="185175at2759"/>
<dbReference type="BioCyc" id="YEAST:G3O-34015-MONOMER"/>
<dbReference type="Reactome" id="R-SCE-6798695">
    <property type="pathway name" value="Neutrophil degranulation"/>
</dbReference>
<dbReference type="Reactome" id="R-SCE-8980692">
    <property type="pathway name" value="RHOA GTPase cycle"/>
</dbReference>
<dbReference type="Reactome" id="R-SCE-9013148">
    <property type="pathway name" value="CDC42 GTPase cycle"/>
</dbReference>
<dbReference type="Reactome" id="R-SCE-9013405">
    <property type="pathway name" value="RHOD GTPase cycle"/>
</dbReference>
<dbReference type="Reactome" id="R-SCE-9013424">
    <property type="pathway name" value="RHOV GTPase cycle"/>
</dbReference>
<dbReference type="Reactome" id="R-SCE-9035034">
    <property type="pathway name" value="RHOF GTPase cycle"/>
</dbReference>
<dbReference type="BioGRID-ORCS" id="855988">
    <property type="hits" value="0 hits in 10 CRISPR screens"/>
</dbReference>
<dbReference type="PRO" id="PR:P32873"/>
<dbReference type="Proteomes" id="UP000002311">
    <property type="component" value="Chromosome XVI"/>
</dbReference>
<dbReference type="RNAct" id="P32873">
    <property type="molecule type" value="protein"/>
</dbReference>
<dbReference type="GO" id="GO:0005938">
    <property type="term" value="C:cell cortex"/>
    <property type="evidence" value="ECO:0000314"/>
    <property type="project" value="SGD"/>
</dbReference>
<dbReference type="GO" id="GO:0051286">
    <property type="term" value="C:cell tip"/>
    <property type="evidence" value="ECO:0000318"/>
    <property type="project" value="GO_Central"/>
</dbReference>
<dbReference type="GO" id="GO:0005934">
    <property type="term" value="C:cellular bud tip"/>
    <property type="evidence" value="ECO:0000314"/>
    <property type="project" value="SGD"/>
</dbReference>
<dbReference type="GO" id="GO:0005737">
    <property type="term" value="C:cytoplasm"/>
    <property type="evidence" value="ECO:0000314"/>
    <property type="project" value="SGD"/>
</dbReference>
<dbReference type="GO" id="GO:0000131">
    <property type="term" value="C:incipient cellular bud site"/>
    <property type="evidence" value="ECO:0000314"/>
    <property type="project" value="SGD"/>
</dbReference>
<dbReference type="GO" id="GO:0043332">
    <property type="term" value="C:mating projection tip"/>
    <property type="evidence" value="ECO:0000314"/>
    <property type="project" value="SGD"/>
</dbReference>
<dbReference type="GO" id="GO:0005886">
    <property type="term" value="C:plasma membrane"/>
    <property type="evidence" value="ECO:0000318"/>
    <property type="project" value="GO_Central"/>
</dbReference>
<dbReference type="GO" id="GO:0030427">
    <property type="term" value="C:site of polarized growth"/>
    <property type="evidence" value="ECO:0000318"/>
    <property type="project" value="GO_Central"/>
</dbReference>
<dbReference type="GO" id="GO:0005096">
    <property type="term" value="F:GTPase activator activity"/>
    <property type="evidence" value="ECO:0000314"/>
    <property type="project" value="SGD"/>
</dbReference>
<dbReference type="GO" id="GO:0032266">
    <property type="term" value="F:phosphatidylinositol-3-phosphate binding"/>
    <property type="evidence" value="ECO:0000314"/>
    <property type="project" value="SGD"/>
</dbReference>
<dbReference type="GO" id="GO:0030010">
    <property type="term" value="P:establishment of cell polarity"/>
    <property type="evidence" value="ECO:0000315"/>
    <property type="project" value="SGD"/>
</dbReference>
<dbReference type="GO" id="GO:0035024">
    <property type="term" value="P:negative regulation of Rho protein signal transduction"/>
    <property type="evidence" value="ECO:0000315"/>
    <property type="project" value="SGD"/>
</dbReference>
<dbReference type="GO" id="GO:0031106">
    <property type="term" value="P:septin ring organization"/>
    <property type="evidence" value="ECO:0000316"/>
    <property type="project" value="SGD"/>
</dbReference>
<dbReference type="GO" id="GO:0007264">
    <property type="term" value="P:small GTPase-mediated signal transduction"/>
    <property type="evidence" value="ECO:0000318"/>
    <property type="project" value="GO_Central"/>
</dbReference>
<dbReference type="CDD" id="cd13277">
    <property type="entry name" value="PH_Bem3"/>
    <property type="match status" value="1"/>
</dbReference>
<dbReference type="CDD" id="cd06093">
    <property type="entry name" value="PX_domain"/>
    <property type="match status" value="1"/>
</dbReference>
<dbReference type="FunFam" id="1.10.555.10:FF:000076">
    <property type="entry name" value="Rho GTPase-activating protein"/>
    <property type="match status" value="1"/>
</dbReference>
<dbReference type="FunFam" id="2.30.29.30:FF:000526">
    <property type="entry name" value="Rho GTPase-activating protein"/>
    <property type="match status" value="1"/>
</dbReference>
<dbReference type="Gene3D" id="3.30.1520.10">
    <property type="entry name" value="Phox-like domain"/>
    <property type="match status" value="1"/>
</dbReference>
<dbReference type="Gene3D" id="2.30.29.30">
    <property type="entry name" value="Pleckstrin-homology domain (PH domain)/Phosphotyrosine-binding domain (PTB)"/>
    <property type="match status" value="1"/>
</dbReference>
<dbReference type="Gene3D" id="1.10.555.10">
    <property type="entry name" value="Rho GTPase activation protein"/>
    <property type="match status" value="1"/>
</dbReference>
<dbReference type="InterPro" id="IPR011993">
    <property type="entry name" value="PH-like_dom_sf"/>
</dbReference>
<dbReference type="InterPro" id="IPR001849">
    <property type="entry name" value="PH_domain"/>
</dbReference>
<dbReference type="InterPro" id="IPR001683">
    <property type="entry name" value="PX_dom"/>
</dbReference>
<dbReference type="InterPro" id="IPR036871">
    <property type="entry name" value="PX_dom_sf"/>
</dbReference>
<dbReference type="InterPro" id="IPR050729">
    <property type="entry name" value="Rho-GAP"/>
</dbReference>
<dbReference type="InterPro" id="IPR008936">
    <property type="entry name" value="Rho_GTPase_activation_prot"/>
</dbReference>
<dbReference type="InterPro" id="IPR000198">
    <property type="entry name" value="RhoGAP_dom"/>
</dbReference>
<dbReference type="PANTHER" id="PTHR23176:SF129">
    <property type="entry name" value="RHO GTPASE ACTIVATING PROTEIN AT 16F, ISOFORM E-RELATED"/>
    <property type="match status" value="1"/>
</dbReference>
<dbReference type="PANTHER" id="PTHR23176">
    <property type="entry name" value="RHO/RAC/CDC GTPASE-ACTIVATING PROTEIN"/>
    <property type="match status" value="1"/>
</dbReference>
<dbReference type="Pfam" id="PF00169">
    <property type="entry name" value="PH"/>
    <property type="match status" value="1"/>
</dbReference>
<dbReference type="Pfam" id="PF00787">
    <property type="entry name" value="PX"/>
    <property type="match status" value="1"/>
</dbReference>
<dbReference type="Pfam" id="PF00620">
    <property type="entry name" value="RhoGAP"/>
    <property type="match status" value="1"/>
</dbReference>
<dbReference type="SMART" id="SM00233">
    <property type="entry name" value="PH"/>
    <property type="match status" value="1"/>
</dbReference>
<dbReference type="SMART" id="SM00312">
    <property type="entry name" value="PX"/>
    <property type="match status" value="1"/>
</dbReference>
<dbReference type="SMART" id="SM00324">
    <property type="entry name" value="RhoGAP"/>
    <property type="match status" value="1"/>
</dbReference>
<dbReference type="SUPFAM" id="SSF48350">
    <property type="entry name" value="GTPase activation domain, GAP"/>
    <property type="match status" value="1"/>
</dbReference>
<dbReference type="SUPFAM" id="SSF50729">
    <property type="entry name" value="PH domain-like"/>
    <property type="match status" value="1"/>
</dbReference>
<dbReference type="SUPFAM" id="SSF64268">
    <property type="entry name" value="PX domain"/>
    <property type="match status" value="1"/>
</dbReference>
<dbReference type="PROSITE" id="PS50003">
    <property type="entry name" value="PH_DOMAIN"/>
    <property type="match status" value="1"/>
</dbReference>
<dbReference type="PROSITE" id="PS50238">
    <property type="entry name" value="RHOGAP"/>
    <property type="match status" value="1"/>
</dbReference>